<proteinExistence type="inferred from homology"/>
<keyword id="KW-1185">Reference proteome</keyword>
<keyword id="KW-0687">Ribonucleoprotein</keyword>
<keyword id="KW-0689">Ribosomal protein</keyword>
<keyword id="KW-0694">RNA-binding</keyword>
<keyword id="KW-0699">rRNA-binding</keyword>
<name>RL4_SYNS9</name>
<accession>Q3AUW2</accession>
<organism>
    <name type="scientific">Synechococcus sp. (strain CC9902)</name>
    <dbReference type="NCBI Taxonomy" id="316279"/>
    <lineage>
        <taxon>Bacteria</taxon>
        <taxon>Bacillati</taxon>
        <taxon>Cyanobacteriota</taxon>
        <taxon>Cyanophyceae</taxon>
        <taxon>Synechococcales</taxon>
        <taxon>Synechococcaceae</taxon>
        <taxon>Synechococcus</taxon>
    </lineage>
</organism>
<protein>
    <recommendedName>
        <fullName evidence="1">Large ribosomal subunit protein uL4</fullName>
    </recommendedName>
    <alternativeName>
        <fullName evidence="3">50S ribosomal protein L4</fullName>
    </alternativeName>
</protein>
<reference key="1">
    <citation type="submission" date="2005-08" db="EMBL/GenBank/DDBJ databases">
        <title>Complete sequence of Synechococcus sp. CC9902.</title>
        <authorList>
            <person name="Copeland A."/>
            <person name="Lucas S."/>
            <person name="Lapidus A."/>
            <person name="Barry K."/>
            <person name="Detter J.C."/>
            <person name="Glavina T."/>
            <person name="Hammon N."/>
            <person name="Israni S."/>
            <person name="Pitluck S."/>
            <person name="Martinez M."/>
            <person name="Schmutz J."/>
            <person name="Larimer F."/>
            <person name="Land M."/>
            <person name="Kyrpides N."/>
            <person name="Ivanova N."/>
            <person name="Richardson P."/>
        </authorList>
    </citation>
    <scope>NUCLEOTIDE SEQUENCE [LARGE SCALE GENOMIC DNA]</scope>
    <source>
        <strain>CC9902</strain>
    </source>
</reference>
<evidence type="ECO:0000255" key="1">
    <source>
        <dbReference type="HAMAP-Rule" id="MF_01328"/>
    </source>
</evidence>
<evidence type="ECO:0000256" key="2">
    <source>
        <dbReference type="SAM" id="MobiDB-lite"/>
    </source>
</evidence>
<evidence type="ECO:0000305" key="3"/>
<feature type="chain" id="PRO_0000242449" description="Large ribosomal subunit protein uL4">
    <location>
        <begin position="1"/>
        <end position="211"/>
    </location>
</feature>
<feature type="region of interest" description="Disordered" evidence="2">
    <location>
        <begin position="42"/>
        <end position="87"/>
    </location>
</feature>
<feature type="compositionally biased region" description="Basic residues" evidence="2">
    <location>
        <begin position="60"/>
        <end position="71"/>
    </location>
</feature>
<comment type="function">
    <text evidence="1">One of the primary rRNA binding proteins, this protein initially binds near the 5'-end of the 23S rRNA. It is important during the early stages of 50S assembly. It makes multiple contacts with different domains of the 23S rRNA in the assembled 50S subunit and ribosome.</text>
</comment>
<comment type="function">
    <text evidence="1">Forms part of the polypeptide exit tunnel.</text>
</comment>
<comment type="subunit">
    <text evidence="1">Part of the 50S ribosomal subunit.</text>
</comment>
<comment type="similarity">
    <text evidence="1">Belongs to the universal ribosomal protein uL4 family.</text>
</comment>
<gene>
    <name evidence="1" type="primary">rplD</name>
    <name evidence="1" type="synonym">rpl4</name>
    <name type="ordered locus">Syncc9902_1956</name>
</gene>
<sequence>MASCVVRDWQGKEAGKATLDLKVAKEASAVDLMHRAVLRQQAHMRQGTASTLTRSEVRGGGRKPYKQKGTGRARQGSVRTPLRPGGGIIFGPKPRSYNLAMNRKERRSALRTALMARIDDITVVKDFGTSLEAPKTREITEALGRLGIAADTKVLIVLTNPSEMVRRSVRNLDKVKLISANHLNVFDLLHANSLVVGEDALTTIQEVYGDD</sequence>
<dbReference type="EMBL" id="CP000097">
    <property type="protein sequence ID" value="ABB26914.1"/>
    <property type="molecule type" value="Genomic_DNA"/>
</dbReference>
<dbReference type="RefSeq" id="WP_011360715.1">
    <property type="nucleotide sequence ID" value="NC_007513.1"/>
</dbReference>
<dbReference type="SMR" id="Q3AUW2"/>
<dbReference type="STRING" id="316279.Syncc9902_1956"/>
<dbReference type="KEGG" id="sye:Syncc9902_1956"/>
<dbReference type="eggNOG" id="COG0088">
    <property type="taxonomic scope" value="Bacteria"/>
</dbReference>
<dbReference type="HOGENOM" id="CLU_041575_5_2_3"/>
<dbReference type="OrthoDB" id="9803201at2"/>
<dbReference type="Proteomes" id="UP000002712">
    <property type="component" value="Chromosome"/>
</dbReference>
<dbReference type="GO" id="GO:1990904">
    <property type="term" value="C:ribonucleoprotein complex"/>
    <property type="evidence" value="ECO:0007669"/>
    <property type="project" value="UniProtKB-KW"/>
</dbReference>
<dbReference type="GO" id="GO:0005840">
    <property type="term" value="C:ribosome"/>
    <property type="evidence" value="ECO:0007669"/>
    <property type="project" value="UniProtKB-KW"/>
</dbReference>
<dbReference type="GO" id="GO:0019843">
    <property type="term" value="F:rRNA binding"/>
    <property type="evidence" value="ECO:0007669"/>
    <property type="project" value="UniProtKB-UniRule"/>
</dbReference>
<dbReference type="GO" id="GO:0003735">
    <property type="term" value="F:structural constituent of ribosome"/>
    <property type="evidence" value="ECO:0007669"/>
    <property type="project" value="InterPro"/>
</dbReference>
<dbReference type="GO" id="GO:0006412">
    <property type="term" value="P:translation"/>
    <property type="evidence" value="ECO:0007669"/>
    <property type="project" value="UniProtKB-UniRule"/>
</dbReference>
<dbReference type="Gene3D" id="3.40.1370.10">
    <property type="match status" value="1"/>
</dbReference>
<dbReference type="HAMAP" id="MF_01328_B">
    <property type="entry name" value="Ribosomal_uL4_B"/>
    <property type="match status" value="1"/>
</dbReference>
<dbReference type="InterPro" id="IPR002136">
    <property type="entry name" value="Ribosomal_uL4"/>
</dbReference>
<dbReference type="InterPro" id="IPR013005">
    <property type="entry name" value="Ribosomal_uL4-like"/>
</dbReference>
<dbReference type="InterPro" id="IPR023574">
    <property type="entry name" value="Ribosomal_uL4_dom_sf"/>
</dbReference>
<dbReference type="NCBIfam" id="TIGR03953">
    <property type="entry name" value="rplD_bact"/>
    <property type="match status" value="1"/>
</dbReference>
<dbReference type="PANTHER" id="PTHR10746">
    <property type="entry name" value="50S RIBOSOMAL PROTEIN L4"/>
    <property type="match status" value="1"/>
</dbReference>
<dbReference type="PANTHER" id="PTHR10746:SF17">
    <property type="entry name" value="LARGE RIBOSOMAL SUBUNIT PROTEIN UL4C"/>
    <property type="match status" value="1"/>
</dbReference>
<dbReference type="Pfam" id="PF00573">
    <property type="entry name" value="Ribosomal_L4"/>
    <property type="match status" value="1"/>
</dbReference>
<dbReference type="SUPFAM" id="SSF52166">
    <property type="entry name" value="Ribosomal protein L4"/>
    <property type="match status" value="1"/>
</dbReference>